<comment type="function">
    <text evidence="7">May play a role in cell differentiation, proliferation and apoptosis. Binds cholesterol in cholesterol-containing plasma membrane microdomains and may play a role in the organization of the apical plasma membrane in epithelial cells. During early retinal development acts as a key regulator of disk morphogenesis (PubMed:19228982). Involved in regulation of MAPK and Akt signaling pathways. In neuroblastoma cells suppresses cell differentiation such as neurite outgrowth in a RET-dependent manner.</text>
</comment>
<comment type="subunit">
    <text evidence="1">Interacts with CDHR1 and with actin filaments. Interacts with NAT8 and NAT8B (By similarity).</text>
</comment>
<comment type="subcellular location">
    <subcellularLocation>
        <location>Apical cell membrane</location>
        <topology>Multi-pass membrane protein</topology>
    </subcellularLocation>
    <subcellularLocation>
        <location>Cell projection</location>
        <location>Microvillus membrane</location>
        <topology>Multi-pass membrane protein</topology>
    </subcellularLocation>
    <subcellularLocation>
        <location>Cell projection</location>
        <location>Cilium</location>
        <location>Photoreceptor outer segment</location>
    </subcellularLocation>
    <subcellularLocation>
        <location evidence="1">Endoplasmic reticulum</location>
    </subcellularLocation>
    <subcellularLocation>
        <location evidence="1">Endoplasmic reticulum-Golgi intermediate compartment</location>
    </subcellularLocation>
    <text>Found in extracellular membrane particles in various body fluids such as ventricular fluid of the developing brain and urine.</text>
</comment>
<comment type="alternative products">
    <event type="alternative splicing"/>
    <isoform>
        <id>O54990-1</id>
        <name>1</name>
        <name>S2</name>
        <sequence type="displayed"/>
    </isoform>
    <isoform>
        <id>O54990-2</id>
        <name>2</name>
        <name>S1</name>
        <sequence type="described" ref="VSP_040006"/>
    </isoform>
    <isoform>
        <id>O54990-3</id>
        <name>3</name>
        <name>S3</name>
        <sequence type="described" ref="VSP_040006 VSP_040010 VSP_040011"/>
    </isoform>
    <isoform>
        <id>O54990-4</id>
        <name>4</name>
        <name>S4</name>
        <sequence type="described" ref="VSP_040005 VSP_040007 VSP_040010 VSP_040011"/>
    </isoform>
    <isoform>
        <id>O54990-5</id>
        <name>5</name>
        <name>S5</name>
        <sequence type="described" ref="VSP_040006 VSP_040007 VSP_040010 VSP_040011"/>
    </isoform>
    <isoform>
        <id>O54990-6</id>
        <name>6</name>
        <name>S6</name>
        <sequence type="described" ref="VSP_040006 VSP_040008 VSP_040009"/>
    </isoform>
    <text>Additional isoforms seem to exist.</text>
</comment>
<comment type="tissue specificity">
    <text evidence="4 5 6 7">In the submandibular gland, expressed on the apical side of epithelial cells. In the parotid gland, expressed in the intercalated ducts. In the sublingual gland, expressed in intercalated ducts. In the extraorbital lacrimal gland, expressed in the intercalated tubules and larger intralobular ducts. Expressed in the retina. Present in urine within small membrane particles (at protein level). In the embryo, expressed on the apical side of neuroepithelial cells and of other epithelia such as lung buds, gut and ureter buds. In the adult, expressed at the apical side of the kidney tubules and of the ependymal layer of the brain. Not expressed in gut, liver, lung, pituitary, adrenal, heart or spleen. Localized to the nascent disk membranes at the base of the rod outer segment in the retina (at protein level).</text>
</comment>
<comment type="developmental stage">
    <text evidence="7">At birth, is detected at the interface between the developing neuroretina and the retinal pigment epithelium (RPE) layer. In the postnatal retina (P20) detected in photoreceptors, with particular concentration in the region of plasma membrane evaginations at the basal part of the outer segment (OS). Expressed by rod and cone photoreceptor cells, most abundantly between the OS and inner segment (IS), in close proximity to the connecting cilium.</text>
</comment>
<comment type="PTM">
    <text>Acetylation at Lys-226, Lys-258 and Lys-265 by NAT8 and NAT8B may control PROM1 protein expression and its function in cell apoptosis.</text>
</comment>
<comment type="disruption phenotype">
    <text evidence="7">Progressive degeneration and functional deterioration of both cone and rod photoreceptors associated with impaired morphogenesis of the disks and OS.</text>
</comment>
<comment type="miscellaneous">
    <text>Fundus images and light microscopy of retinal sections from transgenic mice expressing mutant PROM1 reveal progressive retinal abnormalities visible as subretinal deposits and photoreceptor atrophy.</text>
</comment>
<comment type="similarity">
    <text evidence="12">Belongs to the prominin family.</text>
</comment>
<proteinExistence type="evidence at protein level"/>
<reference key="1">
    <citation type="journal article" date="1997" name="Blood">
        <title>A novel five-transmembrane hematopoietic stem cell antigen: isolation, characterization, and molecular cloning.</title>
        <authorList>
            <person name="Miraglia S."/>
            <person name="Godfrey W."/>
            <person name="Yin A.H."/>
            <person name="Atkins K."/>
            <person name="Warnke R."/>
            <person name="Holden J.T."/>
            <person name="Bray R.A."/>
            <person name="Waller E.K."/>
            <person name="Buck D.W."/>
        </authorList>
    </citation>
    <scope>NUCLEOTIDE SEQUENCE [MRNA] (ISOFORM 1)</scope>
</reference>
<reference key="2">
    <citation type="journal article" date="1997" name="Proc. Natl. Acad. Sci. U.S.A.">
        <title>Prominin, a novel microvilli-specific polytopic membrane protein of the apical surface of epithelial cells, is targeted to plasmalemmal protrusions of non-epithelial cells.</title>
        <authorList>
            <person name="Weigmann A."/>
            <person name="Corbeil D."/>
            <person name="Hellwig A."/>
            <person name="Huttner W.B."/>
        </authorList>
    </citation>
    <scope>NUCLEOTIDE SEQUENCE [MRNA] (ISOFORM 2)</scope>
    <source>
        <tissue>Kidney</tissue>
    </source>
</reference>
<reference key="3">
    <citation type="journal article" date="2004" name="J. Cell Sci.">
        <title>Identification of novel Prominin-1/CD133 splice variants with alternative C-termini and their expression in epididymis and testis.</title>
        <authorList>
            <person name="Fargeas C.A."/>
            <person name="Joester A."/>
            <person name="Missol-Kolka E."/>
            <person name="Hellwig A."/>
            <person name="Huttner W.B."/>
            <person name="Corbeil D."/>
        </authorList>
    </citation>
    <scope>NUCLEOTIDE SEQUENCE [MRNA] (ISOFORMS 3; 4; 5 AND 6)</scope>
    <source>
        <strain>BALB/cJ</strain>
        <tissue>Testis</tissue>
    </source>
</reference>
<reference key="4">
    <citation type="journal article" date="2005" name="Science">
        <title>The transcriptional landscape of the mammalian genome.</title>
        <authorList>
            <person name="Carninci P."/>
            <person name="Kasukawa T."/>
            <person name="Katayama S."/>
            <person name="Gough J."/>
            <person name="Frith M.C."/>
            <person name="Maeda N."/>
            <person name="Oyama R."/>
            <person name="Ravasi T."/>
            <person name="Lenhard B."/>
            <person name="Wells C."/>
            <person name="Kodzius R."/>
            <person name="Shimokawa K."/>
            <person name="Bajic V.B."/>
            <person name="Brenner S.E."/>
            <person name="Batalov S."/>
            <person name="Forrest A.R."/>
            <person name="Zavolan M."/>
            <person name="Davis M.J."/>
            <person name="Wilming L.G."/>
            <person name="Aidinis V."/>
            <person name="Allen J.E."/>
            <person name="Ambesi-Impiombato A."/>
            <person name="Apweiler R."/>
            <person name="Aturaliya R.N."/>
            <person name="Bailey T.L."/>
            <person name="Bansal M."/>
            <person name="Baxter L."/>
            <person name="Beisel K.W."/>
            <person name="Bersano T."/>
            <person name="Bono H."/>
            <person name="Chalk A.M."/>
            <person name="Chiu K.P."/>
            <person name="Choudhary V."/>
            <person name="Christoffels A."/>
            <person name="Clutterbuck D.R."/>
            <person name="Crowe M.L."/>
            <person name="Dalla E."/>
            <person name="Dalrymple B.P."/>
            <person name="de Bono B."/>
            <person name="Della Gatta G."/>
            <person name="di Bernardo D."/>
            <person name="Down T."/>
            <person name="Engstrom P."/>
            <person name="Fagiolini M."/>
            <person name="Faulkner G."/>
            <person name="Fletcher C.F."/>
            <person name="Fukushima T."/>
            <person name="Furuno M."/>
            <person name="Futaki S."/>
            <person name="Gariboldi M."/>
            <person name="Georgii-Hemming P."/>
            <person name="Gingeras T.R."/>
            <person name="Gojobori T."/>
            <person name="Green R.E."/>
            <person name="Gustincich S."/>
            <person name="Harbers M."/>
            <person name="Hayashi Y."/>
            <person name="Hensch T.K."/>
            <person name="Hirokawa N."/>
            <person name="Hill D."/>
            <person name="Huminiecki L."/>
            <person name="Iacono M."/>
            <person name="Ikeo K."/>
            <person name="Iwama A."/>
            <person name="Ishikawa T."/>
            <person name="Jakt M."/>
            <person name="Kanapin A."/>
            <person name="Katoh M."/>
            <person name="Kawasawa Y."/>
            <person name="Kelso J."/>
            <person name="Kitamura H."/>
            <person name="Kitano H."/>
            <person name="Kollias G."/>
            <person name="Krishnan S.P."/>
            <person name="Kruger A."/>
            <person name="Kummerfeld S.K."/>
            <person name="Kurochkin I.V."/>
            <person name="Lareau L.F."/>
            <person name="Lazarevic D."/>
            <person name="Lipovich L."/>
            <person name="Liu J."/>
            <person name="Liuni S."/>
            <person name="McWilliam S."/>
            <person name="Madan Babu M."/>
            <person name="Madera M."/>
            <person name="Marchionni L."/>
            <person name="Matsuda H."/>
            <person name="Matsuzawa S."/>
            <person name="Miki H."/>
            <person name="Mignone F."/>
            <person name="Miyake S."/>
            <person name="Morris K."/>
            <person name="Mottagui-Tabar S."/>
            <person name="Mulder N."/>
            <person name="Nakano N."/>
            <person name="Nakauchi H."/>
            <person name="Ng P."/>
            <person name="Nilsson R."/>
            <person name="Nishiguchi S."/>
            <person name="Nishikawa S."/>
            <person name="Nori F."/>
            <person name="Ohara O."/>
            <person name="Okazaki Y."/>
            <person name="Orlando V."/>
            <person name="Pang K.C."/>
            <person name="Pavan W.J."/>
            <person name="Pavesi G."/>
            <person name="Pesole G."/>
            <person name="Petrovsky N."/>
            <person name="Piazza S."/>
            <person name="Reed J."/>
            <person name="Reid J.F."/>
            <person name="Ring B.Z."/>
            <person name="Ringwald M."/>
            <person name="Rost B."/>
            <person name="Ruan Y."/>
            <person name="Salzberg S.L."/>
            <person name="Sandelin A."/>
            <person name="Schneider C."/>
            <person name="Schoenbach C."/>
            <person name="Sekiguchi K."/>
            <person name="Semple C.A."/>
            <person name="Seno S."/>
            <person name="Sessa L."/>
            <person name="Sheng Y."/>
            <person name="Shibata Y."/>
            <person name="Shimada H."/>
            <person name="Shimada K."/>
            <person name="Silva D."/>
            <person name="Sinclair B."/>
            <person name="Sperling S."/>
            <person name="Stupka E."/>
            <person name="Sugiura K."/>
            <person name="Sultana R."/>
            <person name="Takenaka Y."/>
            <person name="Taki K."/>
            <person name="Tammoja K."/>
            <person name="Tan S.L."/>
            <person name="Tang S."/>
            <person name="Taylor M.S."/>
            <person name="Tegner J."/>
            <person name="Teichmann S.A."/>
            <person name="Ueda H.R."/>
            <person name="van Nimwegen E."/>
            <person name="Verardo R."/>
            <person name="Wei C.L."/>
            <person name="Yagi K."/>
            <person name="Yamanishi H."/>
            <person name="Zabarovsky E."/>
            <person name="Zhu S."/>
            <person name="Zimmer A."/>
            <person name="Hide W."/>
            <person name="Bult C."/>
            <person name="Grimmond S.M."/>
            <person name="Teasdale R.D."/>
            <person name="Liu E.T."/>
            <person name="Brusic V."/>
            <person name="Quackenbush J."/>
            <person name="Wahlestedt C."/>
            <person name="Mattick J.S."/>
            <person name="Hume D.A."/>
            <person name="Kai C."/>
            <person name="Sasaki D."/>
            <person name="Tomaru Y."/>
            <person name="Fukuda S."/>
            <person name="Kanamori-Katayama M."/>
            <person name="Suzuki M."/>
            <person name="Aoki J."/>
            <person name="Arakawa T."/>
            <person name="Iida J."/>
            <person name="Imamura K."/>
            <person name="Itoh M."/>
            <person name="Kato T."/>
            <person name="Kawaji H."/>
            <person name="Kawagashira N."/>
            <person name="Kawashima T."/>
            <person name="Kojima M."/>
            <person name="Kondo S."/>
            <person name="Konno H."/>
            <person name="Nakano K."/>
            <person name="Ninomiya N."/>
            <person name="Nishio T."/>
            <person name="Okada M."/>
            <person name="Plessy C."/>
            <person name="Shibata K."/>
            <person name="Shiraki T."/>
            <person name="Suzuki S."/>
            <person name="Tagami M."/>
            <person name="Waki K."/>
            <person name="Watahiki A."/>
            <person name="Okamura-Oho Y."/>
            <person name="Suzuki H."/>
            <person name="Kawai J."/>
            <person name="Hayashizaki Y."/>
        </authorList>
    </citation>
    <scope>NUCLEOTIDE SEQUENCE [LARGE SCALE MRNA] (ISOFORM 3)</scope>
    <source>
        <strain>C57BL/6J</strain>
        <tissue>Testis</tissue>
    </source>
</reference>
<reference key="5">
    <citation type="journal article" date="2000" name="Nat. Cell Biol.">
        <title>Retention of prominin in microvilli reveals distinct cholesterol-based lipid micro-domains in the apical plasma membrane.</title>
        <authorList>
            <person name="Roeper K."/>
            <person name="Corbeil D."/>
            <person name="Huttner W.B."/>
        </authorList>
    </citation>
    <scope>SUBCELLULAR LOCATION</scope>
    <scope>CHOLESTEROL BINDING</scope>
</reference>
<reference key="6">
    <citation type="journal article" date="2003" name="J. Biol. Chem.">
        <title>Characterization of prominin-2, a new member of the prominin family of pentaspan membrane glycoproteins.</title>
        <authorList>
            <person name="Fargeas C.A."/>
            <person name="Florek M."/>
            <person name="Huttner W.B."/>
            <person name="Corbeil D."/>
        </authorList>
    </citation>
    <scope>TISSUE SPECIFICITY</scope>
    <scope>SUBCELLULAR LOCATION</scope>
</reference>
<reference key="7">
    <citation type="journal article" date="2007" name="Tissue Antigens">
        <title>Nomenclature of prominin-1 (CD133) splice variants - an update.</title>
        <authorList>
            <person name="Fargeas C.A."/>
            <person name="Huttner W.B."/>
            <person name="Corbeil D."/>
        </authorList>
    </citation>
    <scope>NOMENCLATURE OF ISOFORMS</scope>
</reference>
<reference key="8">
    <citation type="journal article" date="2007" name="Cell Tissue Res.">
        <title>Prominin-2 is a cholesterol-binding protein associated with apical and basolateral plasmalemmal protrusions in polarized epithelial cells and released into urine.</title>
        <authorList>
            <person name="Florek M."/>
            <person name="Bauer N."/>
            <person name="Janich P."/>
            <person name="Wilsch-Braeuninger M."/>
            <person name="Fargeas C.A."/>
            <person name="Marzesco A.-M."/>
            <person name="Ehninger G."/>
            <person name="Thiele C."/>
            <person name="Huttner W.B."/>
            <person name="Corbeil D."/>
        </authorList>
    </citation>
    <scope>SUBCELLULAR LOCATION</scope>
</reference>
<reference key="9">
    <citation type="journal article" date="2007" name="Histochem. Cell Biol.">
        <title>Differential expression of prominin-1 (CD133) and prominin-2 in major cephalic exocrine glands of adult mice.</title>
        <authorList>
            <person name="Jaszai J."/>
            <person name="Janich P."/>
            <person name="Farkas L.M."/>
            <person name="Fargeas C.A."/>
            <person name="Huttner W.B."/>
            <person name="Corbeil D."/>
        </authorList>
    </citation>
    <scope>TISSUE SPECIFICITY</scope>
</reference>
<reference key="10">
    <citation type="journal article" date="2007" name="J. Cell Biol.">
        <title>Midbody and primary cilium of neural progenitors release extracellular membrane particles enriched in the stem cell marker prominin-1.</title>
        <authorList>
            <person name="Dubreuil V."/>
            <person name="Marzesco A.M."/>
            <person name="Corbeil D."/>
            <person name="Huttner W.B."/>
            <person name="Wilsch-Braeuninger M."/>
        </authorList>
    </citation>
    <scope>SUBCELLULAR LOCATION</scope>
</reference>
<reference key="11">
    <citation type="journal article" date="2008" name="J. Clin. Invest.">
        <title>Mutant prominin 1 found in patients with macular degeneration disrupts photoreceptor disk morphogenesis in mice.</title>
        <authorList>
            <person name="Yang Z."/>
            <person name="Chen Y."/>
            <person name="Lillo C."/>
            <person name="Chien J."/>
            <person name="Yu Z."/>
            <person name="Michaelides M."/>
            <person name="Klein M."/>
            <person name="Howes K.A."/>
            <person name="Li Y."/>
            <person name="Kaminoh Y."/>
            <person name="Chen H."/>
            <person name="Zhao C."/>
            <person name="Chen Y."/>
            <person name="Al-Sheikh Y.T."/>
            <person name="Karan G."/>
            <person name="Corbeil D."/>
            <person name="Escher P."/>
            <person name="Kamaya S."/>
            <person name="Li C."/>
            <person name="Johnson S."/>
            <person name="Frederick J.M."/>
            <person name="Zhao Y."/>
            <person name="Wang C."/>
            <person name="Cameron D.J."/>
            <person name="Huttner W.B."/>
            <person name="Schorderet D.F."/>
            <person name="Munier F.L."/>
            <person name="Moore A.T."/>
            <person name="Birch D.G."/>
            <person name="Baehr W."/>
            <person name="Hunt D.M."/>
            <person name="Williams D.S."/>
            <person name="Zhang K."/>
        </authorList>
    </citation>
    <scope>TISSUE SPECIFICITY</scope>
</reference>
<reference key="12">
    <citation type="journal article" date="2009" name="J. Neurosci.">
        <title>Loss of the cholesterol-binding protein prominin-1/CD133 causes disk dysmorphogenesis and photoreceptor degeneration.</title>
        <authorList>
            <person name="Zacchigna S."/>
            <person name="Oh H."/>
            <person name="Wilsch-Brauninger M."/>
            <person name="Missol-Kolka E."/>
            <person name="Jaszai J."/>
            <person name="Jansen S."/>
            <person name="Tanimoto N."/>
            <person name="Tonagel F."/>
            <person name="Seeliger M."/>
            <person name="Huttner W.B."/>
            <person name="Corbeil D."/>
            <person name="Dewerchin M."/>
            <person name="Vinckier S."/>
            <person name="Moons L."/>
            <person name="Carmeliet P."/>
        </authorList>
    </citation>
    <scope>FUNCTION</scope>
    <scope>TISSUE SPECIFICITY</scope>
    <scope>DEVELOPMENTAL STAGE</scope>
    <scope>DISRUPTION PHENOTYPE</scope>
</reference>
<reference key="13">
    <citation type="journal article" date="2009" name="Nat. Biotechnol.">
        <title>Mass-spectrometric identification and relative quantification of N-linked cell surface glycoproteins.</title>
        <authorList>
            <person name="Wollscheid B."/>
            <person name="Bausch-Fluck D."/>
            <person name="Henderson C."/>
            <person name="O'Brien R."/>
            <person name="Bibel M."/>
            <person name="Schiess R."/>
            <person name="Aebersold R."/>
            <person name="Watts J.D."/>
        </authorList>
    </citation>
    <scope>GLYCOSYLATION [LARGE SCALE ANALYSIS] AT ASN-273; ASN-291 AND ASN-374</scope>
</reference>
<reference key="14">
    <citation type="journal article" date="2010" name="Cell">
        <title>A tissue-specific atlas of mouse protein phosphorylation and expression.</title>
        <authorList>
            <person name="Huttlin E.L."/>
            <person name="Jedrychowski M.P."/>
            <person name="Elias J.E."/>
            <person name="Goswami T."/>
            <person name="Rad R."/>
            <person name="Beausoleil S.A."/>
            <person name="Villen J."/>
            <person name="Haas W."/>
            <person name="Sowa M.E."/>
            <person name="Gygi S.P."/>
        </authorList>
    </citation>
    <scope>IDENTIFICATION BY MASS SPECTROMETRY [LARGE SCALE ANALYSIS]</scope>
    <source>
        <tissue>Brain</tissue>
        <tissue>Kidney</tissue>
        <tissue>Lung</tissue>
    </source>
</reference>
<accession>O54990</accession>
<accession>O35408</accession>
<accession>Q80XB2</accession>
<accession>Q80XB3</accession>
<accession>Q80XB6</accession>
<accession>Q8BH12</accession>
<name>PROM1_MOUSE</name>
<keyword id="KW-0007">Acetylation</keyword>
<keyword id="KW-0025">Alternative splicing</keyword>
<keyword id="KW-1003">Cell membrane</keyword>
<keyword id="KW-0966">Cell projection</keyword>
<keyword id="KW-0969">Cilium</keyword>
<keyword id="KW-0256">Endoplasmic reticulum</keyword>
<keyword id="KW-0325">Glycoprotein</keyword>
<keyword id="KW-0472">Membrane</keyword>
<keyword id="KW-0597">Phosphoprotein</keyword>
<keyword id="KW-1185">Reference proteome</keyword>
<keyword id="KW-0732">Signal</keyword>
<keyword id="KW-0812">Transmembrane</keyword>
<keyword id="KW-1133">Transmembrane helix</keyword>
<protein>
    <recommendedName>
        <fullName>Prominin-1</fullName>
    </recommendedName>
    <alternativeName>
        <fullName>Antigen AC133 homolog</fullName>
    </alternativeName>
    <alternativeName>
        <fullName>Prominin-like protein 1</fullName>
    </alternativeName>
    <cdAntigenName>CD133</cdAntigenName>
</protein>
<dbReference type="EMBL" id="AF039663">
    <property type="protein sequence ID" value="AAB96916.1"/>
    <property type="molecule type" value="mRNA"/>
</dbReference>
<dbReference type="EMBL" id="AF026269">
    <property type="protein sequence ID" value="AAB86715.1"/>
    <property type="molecule type" value="mRNA"/>
</dbReference>
<dbReference type="EMBL" id="AF305215">
    <property type="protein sequence ID" value="AAO11840.1"/>
    <property type="molecule type" value="mRNA"/>
</dbReference>
<dbReference type="EMBL" id="AY099088">
    <property type="protein sequence ID" value="AAM28245.1"/>
    <property type="molecule type" value="mRNA"/>
</dbReference>
<dbReference type="EMBL" id="AY223521">
    <property type="protein sequence ID" value="AAO72429.1"/>
    <property type="molecule type" value="mRNA"/>
</dbReference>
<dbReference type="EMBL" id="AY223522">
    <property type="protein sequence ID" value="AAO72430.1"/>
    <property type="molecule type" value="mRNA"/>
</dbReference>
<dbReference type="EMBL" id="AK030027">
    <property type="protein sequence ID" value="BAC26745.1"/>
    <property type="molecule type" value="mRNA"/>
</dbReference>
<dbReference type="CCDS" id="CCDS39082.1">
    <molecule id="O54990-2"/>
</dbReference>
<dbReference type="CCDS" id="CCDS51491.1">
    <molecule id="O54990-5"/>
</dbReference>
<dbReference type="CCDS" id="CCDS51493.1">
    <molecule id="O54990-3"/>
</dbReference>
<dbReference type="CCDS" id="CCDS51494.1">
    <molecule id="O54990-1"/>
</dbReference>
<dbReference type="CCDS" id="CCDS80275.1">
    <molecule id="O54990-4"/>
</dbReference>
<dbReference type="PIR" id="T08881">
    <property type="entry name" value="T08881"/>
</dbReference>
<dbReference type="RefSeq" id="NP_001157050.1">
    <property type="nucleotide sequence ID" value="NM_001163578.1"/>
</dbReference>
<dbReference type="RefSeq" id="NP_001157053.1">
    <property type="nucleotide sequence ID" value="NM_001163581.1"/>
</dbReference>
<dbReference type="RefSeq" id="NP_001157054.1">
    <property type="nucleotide sequence ID" value="NM_001163582.1"/>
</dbReference>
<dbReference type="RefSeq" id="NP_001157055.1">
    <property type="nucleotide sequence ID" value="NM_001163583.1"/>
</dbReference>
<dbReference type="BioGRID" id="202393">
    <property type="interactions" value="1"/>
</dbReference>
<dbReference type="CORUM" id="O54990"/>
<dbReference type="FunCoup" id="O54990">
    <property type="interactions" value="57"/>
</dbReference>
<dbReference type="STRING" id="10090.ENSMUSP00000073751"/>
<dbReference type="GlyCosmos" id="O54990">
    <property type="glycosylation" value="8 sites, No reported glycans"/>
</dbReference>
<dbReference type="GlyGen" id="O54990">
    <property type="glycosylation" value="9 sites, 4 N-linked glycans (6 sites), 1 O-linked glycan (1 site)"/>
</dbReference>
<dbReference type="iPTMnet" id="O54990"/>
<dbReference type="PhosphoSitePlus" id="O54990"/>
<dbReference type="jPOST" id="O54990"/>
<dbReference type="PaxDb" id="10090-ENSMUSP00000073751"/>
<dbReference type="PeptideAtlas" id="O54990"/>
<dbReference type="ProteomicsDB" id="291882">
    <molecule id="O54990-1"/>
</dbReference>
<dbReference type="ProteomicsDB" id="291883">
    <molecule id="O54990-2"/>
</dbReference>
<dbReference type="ProteomicsDB" id="291884">
    <molecule id="O54990-3"/>
</dbReference>
<dbReference type="ProteomicsDB" id="291885">
    <molecule id="O54990-4"/>
</dbReference>
<dbReference type="ProteomicsDB" id="291886">
    <molecule id="O54990-5"/>
</dbReference>
<dbReference type="ProteomicsDB" id="291887">
    <molecule id="O54990-6"/>
</dbReference>
<dbReference type="DNASU" id="19126"/>
<dbReference type="GeneID" id="19126"/>
<dbReference type="KEGG" id="mmu:19126"/>
<dbReference type="UCSC" id="uc008xii.1">
    <molecule id="O54990-4"/>
    <property type="organism name" value="mouse"/>
</dbReference>
<dbReference type="AGR" id="MGI:1100886"/>
<dbReference type="CTD" id="8842"/>
<dbReference type="MGI" id="MGI:1100886">
    <property type="gene designation" value="Prom1"/>
</dbReference>
<dbReference type="eggNOG" id="KOG4331">
    <property type="taxonomic scope" value="Eukaryota"/>
</dbReference>
<dbReference type="InParanoid" id="O54990"/>
<dbReference type="OrthoDB" id="6229420at2759"/>
<dbReference type="PhylomeDB" id="O54990"/>
<dbReference type="BioGRID-ORCS" id="19126">
    <property type="hits" value="1 hit in 77 CRISPR screens"/>
</dbReference>
<dbReference type="ChiTaRS" id="Prom1">
    <property type="organism name" value="mouse"/>
</dbReference>
<dbReference type="PRO" id="PR:O54990"/>
<dbReference type="Proteomes" id="UP000000589">
    <property type="component" value="Unplaced"/>
</dbReference>
<dbReference type="RNAct" id="O54990">
    <property type="molecule type" value="protein"/>
</dbReference>
<dbReference type="GO" id="GO:0016324">
    <property type="term" value="C:apical plasma membrane"/>
    <property type="evidence" value="ECO:0000314"/>
    <property type="project" value="UniProtKB"/>
</dbReference>
<dbReference type="GO" id="GO:0005903">
    <property type="term" value="C:brush border"/>
    <property type="evidence" value="ECO:0000314"/>
    <property type="project" value="MGI"/>
</dbReference>
<dbReference type="GO" id="GO:0042995">
    <property type="term" value="C:cell projection"/>
    <property type="evidence" value="ECO:0000314"/>
    <property type="project" value="MGI"/>
</dbReference>
<dbReference type="GO" id="GO:0009986">
    <property type="term" value="C:cell surface"/>
    <property type="evidence" value="ECO:0000314"/>
    <property type="project" value="MGI"/>
</dbReference>
<dbReference type="GO" id="GO:0005929">
    <property type="term" value="C:cilium"/>
    <property type="evidence" value="ECO:0000314"/>
    <property type="project" value="UniProtKB"/>
</dbReference>
<dbReference type="GO" id="GO:0005783">
    <property type="term" value="C:endoplasmic reticulum"/>
    <property type="evidence" value="ECO:0000250"/>
    <property type="project" value="UniProtKB"/>
</dbReference>
<dbReference type="GO" id="GO:0005793">
    <property type="term" value="C:endoplasmic reticulum-Golgi intermediate compartment"/>
    <property type="evidence" value="ECO:0000250"/>
    <property type="project" value="UniProtKB"/>
</dbReference>
<dbReference type="GO" id="GO:0005615">
    <property type="term" value="C:extracellular space"/>
    <property type="evidence" value="ECO:0000314"/>
    <property type="project" value="MGI"/>
</dbReference>
<dbReference type="GO" id="GO:0005902">
    <property type="term" value="C:microvillus"/>
    <property type="evidence" value="ECO:0000314"/>
    <property type="project" value="MGI"/>
</dbReference>
<dbReference type="GO" id="GO:0031528">
    <property type="term" value="C:microvillus membrane"/>
    <property type="evidence" value="ECO:0007669"/>
    <property type="project" value="UniProtKB-SubCell"/>
</dbReference>
<dbReference type="GO" id="GO:0001750">
    <property type="term" value="C:photoreceptor outer segment"/>
    <property type="evidence" value="ECO:0000314"/>
    <property type="project" value="UniProtKB"/>
</dbReference>
<dbReference type="GO" id="GO:0005886">
    <property type="term" value="C:plasma membrane"/>
    <property type="evidence" value="ECO:0000314"/>
    <property type="project" value="MGI"/>
</dbReference>
<dbReference type="GO" id="GO:0071914">
    <property type="term" value="C:prominosome"/>
    <property type="evidence" value="ECO:0000314"/>
    <property type="project" value="UniProtKB"/>
</dbReference>
<dbReference type="GO" id="GO:0032420">
    <property type="term" value="C:stereocilium"/>
    <property type="evidence" value="ECO:0000314"/>
    <property type="project" value="MGI"/>
</dbReference>
<dbReference type="GO" id="GO:0060219">
    <property type="term" value="P:camera-type eye photoreceptor cell differentiation"/>
    <property type="evidence" value="ECO:0000315"/>
    <property type="project" value="UniProtKB"/>
</dbReference>
<dbReference type="GO" id="GO:0010842">
    <property type="term" value="P:retina layer formation"/>
    <property type="evidence" value="ECO:0000315"/>
    <property type="project" value="UniProtKB"/>
</dbReference>
<dbReference type="InterPro" id="IPR008795">
    <property type="entry name" value="Prominin"/>
</dbReference>
<dbReference type="PANTHER" id="PTHR22730">
    <property type="entry name" value="PROMININ PROM PROTEIN"/>
    <property type="match status" value="1"/>
</dbReference>
<dbReference type="PANTHER" id="PTHR22730:SF3">
    <property type="entry name" value="PROMININ-1"/>
    <property type="match status" value="1"/>
</dbReference>
<dbReference type="Pfam" id="PF05478">
    <property type="entry name" value="Prominin"/>
    <property type="match status" value="1"/>
</dbReference>
<gene>
    <name type="primary">Prom1</name>
    <name type="synonym">Prom</name>
    <name type="synonym">Proml1</name>
</gene>
<evidence type="ECO:0000250" key="1"/>
<evidence type="ECO:0000250" key="2">
    <source>
        <dbReference type="UniProtKB" id="O43490"/>
    </source>
</evidence>
<evidence type="ECO:0000255" key="3"/>
<evidence type="ECO:0000269" key="4">
    <source>
    </source>
</evidence>
<evidence type="ECO:0000269" key="5">
    <source>
    </source>
</evidence>
<evidence type="ECO:0000269" key="6">
    <source>
    </source>
</evidence>
<evidence type="ECO:0000269" key="7">
    <source>
    </source>
</evidence>
<evidence type="ECO:0000269" key="8">
    <source>
    </source>
</evidence>
<evidence type="ECO:0000303" key="9">
    <source>
    </source>
</evidence>
<evidence type="ECO:0000303" key="10">
    <source>
    </source>
</evidence>
<evidence type="ECO:0000303" key="11">
    <source>
    </source>
</evidence>
<evidence type="ECO:0000305" key="12"/>
<sequence>MALVFSALLLLGLCGKISSEGQPAFHNTPGAMNYELPTTKYETQDTFNAGIVGPLYKMVHIFLSVVQPNDFPLDLIKKLIQNKKFDISVDSKEPEIIVLALKIALYEIGVLICAILGLLFIILMPLVGCFFCMCRCCNKCGGEMHQRQKQNAPCRRKCLGLSLLVICLLMSLGIIYGFVANQQTRTRIKGTQKLAKSNFRDFQTLLTETPKQIDYVVEQYTNTKNKAFSDLDGIGSVLGGRIKDQLKPKVTPVLEEIKAMATAIKQTKDALQNMSSSLKSLQDAATQLNTNLSSVRNSIENSLSSSDCTSDPASKICDSIRPSLSSLGSSLNSSQLPSVDRELNTVTEVDKTDLESLVKRGYTTIDEIPNTIQNQTVDVIKDVKNTLDSISSNIKDMSQSIPIEDMLLQVSHYLNNSNRYLNQELPKLEEYDSYWWLGGLIVCFLLTLIVTFFFLGLLCGVFGYDKHATPTRRGCVSNTGGIFLMAGVGFGFLFCWILMILVVLTFVVGANVEKLLCEPYENKKLLQVLDTPYLLKEQWQFYLSGMLFNNPDINMTFEQVYRDCKRGRGIYAAFQLENVVNVSDHFNIDQISENINTELENLNVNIDSIELLDNTGRKSLEDFAHSGIDTIDYSTYLKETEKSPTEVNLLTFASTLEAKANQLPEGKPKQAFLLDVQNIRAIHQHLLPPVQQSLNTLRQSVWTLQQTSNKLPEKVKKILASLDSVQHFLTNNVSLIVIGETKKFGKTILGYFEHYLHWVFYAITEKMTSCKPMATAMDSAVNGILCGYVADPLNLFWFGIGKATVLLLPAVIIAIKLAKYYRRMDSEDVYDDVETVPMKNLEIGSNGYHKDHLYGVHNPVMTSPSRY</sequence>
<organism>
    <name type="scientific">Mus musculus</name>
    <name type="common">Mouse</name>
    <dbReference type="NCBI Taxonomy" id="10090"/>
    <lineage>
        <taxon>Eukaryota</taxon>
        <taxon>Metazoa</taxon>
        <taxon>Chordata</taxon>
        <taxon>Craniata</taxon>
        <taxon>Vertebrata</taxon>
        <taxon>Euteleostomi</taxon>
        <taxon>Mammalia</taxon>
        <taxon>Eutheria</taxon>
        <taxon>Euarchontoglires</taxon>
        <taxon>Glires</taxon>
        <taxon>Rodentia</taxon>
        <taxon>Myomorpha</taxon>
        <taxon>Muroidea</taxon>
        <taxon>Muridae</taxon>
        <taxon>Murinae</taxon>
        <taxon>Mus</taxon>
        <taxon>Mus</taxon>
    </lineage>
</organism>
<feature type="signal peptide" evidence="3">
    <location>
        <begin position="1"/>
        <end position="19"/>
    </location>
</feature>
<feature type="chain" id="PRO_0000025814" description="Prominin-1">
    <location>
        <begin position="20"/>
        <end position="867"/>
    </location>
</feature>
<feature type="topological domain" description="Extracellular" evidence="3">
    <location>
        <begin position="20"/>
        <end position="107"/>
    </location>
</feature>
<feature type="transmembrane region" description="Helical" evidence="3">
    <location>
        <begin position="108"/>
        <end position="128"/>
    </location>
</feature>
<feature type="topological domain" description="Cytoplasmic" evidence="3">
    <location>
        <begin position="129"/>
        <end position="158"/>
    </location>
</feature>
<feature type="transmembrane region" description="Helical" evidence="3">
    <location>
        <begin position="159"/>
        <end position="179"/>
    </location>
</feature>
<feature type="topological domain" description="Extracellular" evidence="3">
    <location>
        <begin position="180"/>
        <end position="434"/>
    </location>
</feature>
<feature type="transmembrane region" description="Helical" evidence="3">
    <location>
        <begin position="435"/>
        <end position="455"/>
    </location>
</feature>
<feature type="topological domain" description="Cytoplasmic" evidence="3">
    <location>
        <begin position="456"/>
        <end position="487"/>
    </location>
</feature>
<feature type="transmembrane region" description="Helical" evidence="3">
    <location>
        <begin position="488"/>
        <end position="508"/>
    </location>
</feature>
<feature type="topological domain" description="Extracellular" evidence="3">
    <location>
        <begin position="509"/>
        <end position="794"/>
    </location>
</feature>
<feature type="transmembrane region" description="Helical" evidence="3">
    <location>
        <begin position="795"/>
        <end position="815"/>
    </location>
</feature>
<feature type="topological domain" description="Cytoplasmic" evidence="3">
    <location>
        <begin position="816"/>
        <end position="867"/>
    </location>
</feature>
<feature type="modified residue" description="N6-acetyllysine" evidence="2">
    <location>
        <position position="226"/>
    </location>
</feature>
<feature type="modified residue" description="N6-acetyllysine" evidence="2">
    <location>
        <position position="258"/>
    </location>
</feature>
<feature type="modified residue" description="N6-acetyllysine" evidence="2">
    <location>
        <position position="265"/>
    </location>
</feature>
<feature type="modified residue" description="Phosphoserine" evidence="2">
    <location>
        <position position="865"/>
    </location>
</feature>
<feature type="glycosylation site" description="N-linked (GlcNAc...) asparagine" evidence="8">
    <location>
        <position position="273"/>
    </location>
</feature>
<feature type="glycosylation site" description="N-linked (GlcNAc...) asparagine" evidence="8">
    <location>
        <position position="291"/>
    </location>
</feature>
<feature type="glycosylation site" description="N-linked (GlcNAc...) asparagine" evidence="3">
    <location>
        <position position="332"/>
    </location>
</feature>
<feature type="glycosylation site" description="N-linked (GlcNAc...) asparagine" evidence="8">
    <location>
        <position position="374"/>
    </location>
</feature>
<feature type="glycosylation site" description="N-linked (GlcNAc...) asparagine" evidence="3">
    <location>
        <position position="415"/>
    </location>
</feature>
<feature type="glycosylation site" description="N-linked (GlcNAc...) asparagine" evidence="3">
    <location>
        <position position="554"/>
    </location>
</feature>
<feature type="glycosylation site" description="N-linked (GlcNAc...) asparagine" evidence="3">
    <location>
        <position position="581"/>
    </location>
</feature>
<feature type="glycosylation site" description="N-linked (GlcNAc...) asparagine" evidence="3">
    <location>
        <position position="732"/>
    </location>
</feature>
<feature type="splice variant" id="VSP_040005" description="In isoform 4." evidence="9">
    <location>
        <begin position="94"/>
        <end position="107"/>
    </location>
</feature>
<feature type="splice variant" id="VSP_040006" description="In isoform 2, isoform 3, isoform 5 and isoform 6." evidence="9 10 11">
    <location>
        <begin position="94"/>
        <end position="102"/>
    </location>
</feature>
<feature type="splice variant" id="VSP_040007" description="In isoform 4 and isoform 5." evidence="9">
    <original>QLPSVDRELNTVTEVDKTDLESLVKR</original>
    <variation>Q</variation>
    <location>
        <begin position="335"/>
        <end position="360"/>
    </location>
</feature>
<feature type="splice variant" id="VSP_040008" description="In isoform 6." evidence="9">
    <original>D</original>
    <variation>E</variation>
    <location>
        <position position="832"/>
    </location>
</feature>
<feature type="splice variant" id="VSP_040009" description="In isoform 6." evidence="9">
    <location>
        <begin position="833"/>
        <end position="867"/>
    </location>
</feature>
<feature type="splice variant" id="VSP_040010" description="In isoform 3, isoform 4 and isoform 5." evidence="9 10">
    <original>VETVPMKNLEI</original>
    <variation>SSVSGMWHFTL</variation>
    <location>
        <begin position="833"/>
        <end position="843"/>
    </location>
</feature>
<feature type="splice variant" id="VSP_040011" description="In isoform 3, isoform 4 and isoform 5." evidence="9 10">
    <location>
        <begin position="844"/>
        <end position="867"/>
    </location>
</feature>
<feature type="sequence conflict" description="In Ref. 2; AAB86715, 3; AAM28245/AAO11840/AAO72429/AAO72430 and 4; BAC26745." evidence="12" ref="2 3 4">
    <original>S</original>
    <variation>N</variation>
    <location>
        <position position="64"/>
    </location>
</feature>
<feature type="sequence conflict" description="In Ref. 2; AAB86715, 3; AAM28245/AAO11840/AAO72429/AAO72430 and 4; BAC26745." evidence="12" ref="2 3 4">
    <original>K</original>
    <variation>N</variation>
    <location>
        <position position="84"/>
    </location>
</feature>
<feature type="sequence conflict" description="In Ref. 2; AAB86715, 3; AAM28245/AAO72429/AAO72430 and 4; BAC26745." evidence="12" ref="2 3 4">
    <original>P</original>
    <variation>L</variation>
    <location>
        <position position="668"/>
    </location>
</feature>
<feature type="sequence conflict" description="In Ref. 2; AAB86715." evidence="12" ref="2">
    <original>G</original>
    <variation>D</variation>
    <location>
        <position position="844"/>
    </location>
</feature>